<sequence length="70" mass="7998">MLKMGVLLFTFLVLFPLATLQLDADQPVEQYAGNKQDLNPDEKREMILPALRQWQCCTMAWCDSGCLCCE</sequence>
<reference key="1">
    <citation type="journal article" date="2001" name="Mol. Biol. Evol.">
        <title>Mechanisms for evolving hypervariability: the case of conopeptides.</title>
        <authorList>
            <person name="Conticello S.G."/>
            <person name="Gilad Y."/>
            <person name="Avidan N."/>
            <person name="Ben-Asher E."/>
            <person name="Levy Z."/>
            <person name="Fainzilber M."/>
        </authorList>
    </citation>
    <scope>NUCLEOTIDE SEQUENCE [MRNA]</scope>
    <source>
        <tissue>Venom duct</tissue>
    </source>
</reference>
<feature type="signal peptide" evidence="3">
    <location>
        <begin position="1"/>
        <end position="24"/>
    </location>
</feature>
<feature type="propeptide" id="PRO_0000404880" evidence="1">
    <location>
        <begin position="25"/>
        <end position="42"/>
    </location>
</feature>
<feature type="peptide" id="PRO_0000404881" description="Conotoxin PnMLKM-013">
    <location>
        <begin position="45"/>
        <end position="70"/>
    </location>
</feature>
<feature type="disulfide bond" evidence="2">
    <location>
        <begin position="56"/>
        <end position="68"/>
    </location>
</feature>
<feature type="disulfide bond" evidence="2">
    <location>
        <begin position="57"/>
        <end position="66"/>
    </location>
</feature>
<feature type="disulfide bond" evidence="2">
    <location>
        <begin position="62"/>
        <end position="69"/>
    </location>
</feature>
<accession>Q9BPH5</accession>
<protein>
    <recommendedName>
        <fullName>Conotoxin PnMLKM-013</fullName>
    </recommendedName>
</protein>
<keyword id="KW-0165">Cleavage on pair of basic residues</keyword>
<keyword id="KW-1015">Disulfide bond</keyword>
<keyword id="KW-0528">Neurotoxin</keyword>
<keyword id="KW-0964">Secreted</keyword>
<keyword id="KW-0732">Signal</keyword>
<keyword id="KW-0800">Toxin</keyword>
<dbReference type="EMBL" id="AF214950">
    <property type="protein sequence ID" value="AAG60378.1"/>
    <property type="molecule type" value="mRNA"/>
</dbReference>
<dbReference type="ConoServer" id="637">
    <property type="toxin name" value="Pn3.2 precursor"/>
</dbReference>
<dbReference type="GO" id="GO:0005576">
    <property type="term" value="C:extracellular region"/>
    <property type="evidence" value="ECO:0007669"/>
    <property type="project" value="UniProtKB-SubCell"/>
</dbReference>
<dbReference type="GO" id="GO:0008200">
    <property type="term" value="F:ion channel inhibitor activity"/>
    <property type="evidence" value="ECO:0007669"/>
    <property type="project" value="InterPro"/>
</dbReference>
<dbReference type="GO" id="GO:0090729">
    <property type="term" value="F:toxin activity"/>
    <property type="evidence" value="ECO:0007669"/>
    <property type="project" value="UniProtKB-KW"/>
</dbReference>
<dbReference type="InterPro" id="IPR004214">
    <property type="entry name" value="Conotoxin"/>
</dbReference>
<dbReference type="Pfam" id="PF02950">
    <property type="entry name" value="Conotoxin"/>
    <property type="match status" value="1"/>
</dbReference>
<organism>
    <name type="scientific">Conus pennaceus</name>
    <name type="common">Feathered cone</name>
    <name type="synonym">Conus episcopus</name>
    <dbReference type="NCBI Taxonomy" id="37335"/>
    <lineage>
        <taxon>Eukaryota</taxon>
        <taxon>Metazoa</taxon>
        <taxon>Spiralia</taxon>
        <taxon>Lophotrochozoa</taxon>
        <taxon>Mollusca</taxon>
        <taxon>Gastropoda</taxon>
        <taxon>Caenogastropoda</taxon>
        <taxon>Neogastropoda</taxon>
        <taxon>Conoidea</taxon>
        <taxon>Conidae</taxon>
        <taxon>Conus</taxon>
        <taxon>Darioconus</taxon>
    </lineage>
</organism>
<comment type="subcellular location">
    <subcellularLocation>
        <location evidence="4">Secreted</location>
    </subcellularLocation>
</comment>
<comment type="tissue specificity">
    <text evidence="5">Expressed by the venom duct.</text>
</comment>
<comment type="domain">
    <text evidence="4">The cysteine framework is III (CC-C-C-CC). Classified in the M-1 branch, since 1 residue stands between the fourth and the fifth cysteine residues.</text>
</comment>
<comment type="similarity">
    <text evidence="4">Belongs to the conotoxin M superfamily.</text>
</comment>
<name>CM32_CONPE</name>
<evidence type="ECO:0000250" key="1"/>
<evidence type="ECO:0000250" key="2">
    <source>
        <dbReference type="UniProtKB" id="Q5EHP3"/>
    </source>
</evidence>
<evidence type="ECO:0000255" key="3"/>
<evidence type="ECO:0000305" key="4"/>
<evidence type="ECO:0000305" key="5">
    <source>
    </source>
</evidence>
<proteinExistence type="inferred from homology"/>